<accession>A7X2X9</accession>
<reference key="1">
    <citation type="journal article" date="2008" name="Antimicrob. Agents Chemother.">
        <title>Mutated response regulator graR is responsible for phenotypic conversion of Staphylococcus aureus from heterogeneous vancomycin-intermediate resistance to vancomycin-intermediate resistance.</title>
        <authorList>
            <person name="Neoh H.-M."/>
            <person name="Cui L."/>
            <person name="Yuzawa H."/>
            <person name="Takeuchi F."/>
            <person name="Matsuo M."/>
            <person name="Hiramatsu K."/>
        </authorList>
    </citation>
    <scope>NUCLEOTIDE SEQUENCE [LARGE SCALE GENOMIC DNA]</scope>
    <source>
        <strain>Mu3 / ATCC 700698</strain>
    </source>
</reference>
<organism>
    <name type="scientific">Staphylococcus aureus (strain Mu3 / ATCC 700698)</name>
    <dbReference type="NCBI Taxonomy" id="418127"/>
    <lineage>
        <taxon>Bacteria</taxon>
        <taxon>Bacillati</taxon>
        <taxon>Bacillota</taxon>
        <taxon>Bacilli</taxon>
        <taxon>Bacillales</taxon>
        <taxon>Staphylococcaceae</taxon>
        <taxon>Staphylococcus</taxon>
    </lineage>
</organism>
<comment type="function">
    <text evidence="1">Methylates ribosomal protein L11.</text>
</comment>
<comment type="catalytic activity">
    <reaction evidence="1">
        <text>L-lysyl-[protein] + 3 S-adenosyl-L-methionine = N(6),N(6),N(6)-trimethyl-L-lysyl-[protein] + 3 S-adenosyl-L-homocysteine + 3 H(+)</text>
        <dbReference type="Rhea" id="RHEA:54192"/>
        <dbReference type="Rhea" id="RHEA-COMP:9752"/>
        <dbReference type="Rhea" id="RHEA-COMP:13826"/>
        <dbReference type="ChEBI" id="CHEBI:15378"/>
        <dbReference type="ChEBI" id="CHEBI:29969"/>
        <dbReference type="ChEBI" id="CHEBI:57856"/>
        <dbReference type="ChEBI" id="CHEBI:59789"/>
        <dbReference type="ChEBI" id="CHEBI:61961"/>
    </reaction>
</comment>
<comment type="subcellular location">
    <subcellularLocation>
        <location evidence="1">Cytoplasm</location>
    </subcellularLocation>
</comment>
<comment type="similarity">
    <text evidence="1">Belongs to the methyltransferase superfamily. PrmA family.</text>
</comment>
<name>PRMA_STAA1</name>
<gene>
    <name evidence="1" type="primary">prmA</name>
    <name type="ordered locus">SAHV_1565</name>
</gene>
<dbReference type="EC" id="2.1.1.-" evidence="1"/>
<dbReference type="EMBL" id="AP009324">
    <property type="protein sequence ID" value="BAF78448.1"/>
    <property type="molecule type" value="Genomic_DNA"/>
</dbReference>
<dbReference type="RefSeq" id="WP_001104607.1">
    <property type="nucleotide sequence ID" value="NC_009782.1"/>
</dbReference>
<dbReference type="SMR" id="A7X2X9"/>
<dbReference type="KEGG" id="saw:SAHV_1565"/>
<dbReference type="HOGENOM" id="CLU_049382_0_1_9"/>
<dbReference type="GO" id="GO:0005737">
    <property type="term" value="C:cytoplasm"/>
    <property type="evidence" value="ECO:0007669"/>
    <property type="project" value="UniProtKB-SubCell"/>
</dbReference>
<dbReference type="GO" id="GO:0016279">
    <property type="term" value="F:protein-lysine N-methyltransferase activity"/>
    <property type="evidence" value="ECO:0007669"/>
    <property type="project" value="RHEA"/>
</dbReference>
<dbReference type="GO" id="GO:0032259">
    <property type="term" value="P:methylation"/>
    <property type="evidence" value="ECO:0007669"/>
    <property type="project" value="UniProtKB-KW"/>
</dbReference>
<dbReference type="CDD" id="cd02440">
    <property type="entry name" value="AdoMet_MTases"/>
    <property type="match status" value="1"/>
</dbReference>
<dbReference type="Gene3D" id="3.40.50.150">
    <property type="entry name" value="Vaccinia Virus protein VP39"/>
    <property type="match status" value="1"/>
</dbReference>
<dbReference type="HAMAP" id="MF_00735">
    <property type="entry name" value="Methyltr_PrmA"/>
    <property type="match status" value="1"/>
</dbReference>
<dbReference type="InterPro" id="IPR050078">
    <property type="entry name" value="Ribosomal_L11_MeTrfase_PrmA"/>
</dbReference>
<dbReference type="InterPro" id="IPR004498">
    <property type="entry name" value="Ribosomal_PrmA_MeTrfase"/>
</dbReference>
<dbReference type="InterPro" id="IPR029063">
    <property type="entry name" value="SAM-dependent_MTases_sf"/>
</dbReference>
<dbReference type="NCBIfam" id="TIGR00406">
    <property type="entry name" value="prmA"/>
    <property type="match status" value="1"/>
</dbReference>
<dbReference type="PANTHER" id="PTHR43648">
    <property type="entry name" value="ELECTRON TRANSFER FLAVOPROTEIN BETA SUBUNIT LYSINE METHYLTRANSFERASE"/>
    <property type="match status" value="1"/>
</dbReference>
<dbReference type="PANTHER" id="PTHR43648:SF1">
    <property type="entry name" value="ELECTRON TRANSFER FLAVOPROTEIN BETA SUBUNIT LYSINE METHYLTRANSFERASE"/>
    <property type="match status" value="1"/>
</dbReference>
<dbReference type="Pfam" id="PF06325">
    <property type="entry name" value="PrmA"/>
    <property type="match status" value="1"/>
</dbReference>
<dbReference type="PIRSF" id="PIRSF000401">
    <property type="entry name" value="RPL11_MTase"/>
    <property type="match status" value="1"/>
</dbReference>
<dbReference type="SUPFAM" id="SSF53335">
    <property type="entry name" value="S-adenosyl-L-methionine-dependent methyltransferases"/>
    <property type="match status" value="1"/>
</dbReference>
<evidence type="ECO:0000255" key="1">
    <source>
        <dbReference type="HAMAP-Rule" id="MF_00735"/>
    </source>
</evidence>
<proteinExistence type="inferred from homology"/>
<keyword id="KW-0963">Cytoplasm</keyword>
<keyword id="KW-0489">Methyltransferase</keyword>
<keyword id="KW-0949">S-adenosyl-L-methionine</keyword>
<keyword id="KW-0808">Transferase</keyword>
<protein>
    <recommendedName>
        <fullName evidence="1">Ribosomal protein L11 methyltransferase</fullName>
        <shortName evidence="1">L11 Mtase</shortName>
        <ecNumber evidence="1">2.1.1.-</ecNumber>
    </recommendedName>
</protein>
<feature type="chain" id="PRO_1000046099" description="Ribosomal protein L11 methyltransferase">
    <location>
        <begin position="1"/>
        <end position="312"/>
    </location>
</feature>
<feature type="binding site" evidence="1">
    <location>
        <position position="160"/>
    </location>
    <ligand>
        <name>S-adenosyl-L-methionine</name>
        <dbReference type="ChEBI" id="CHEBI:59789"/>
    </ligand>
</feature>
<feature type="binding site" evidence="1">
    <location>
        <position position="181"/>
    </location>
    <ligand>
        <name>S-adenosyl-L-methionine</name>
        <dbReference type="ChEBI" id="CHEBI:59789"/>
    </ligand>
</feature>
<feature type="binding site" evidence="1">
    <location>
        <position position="203"/>
    </location>
    <ligand>
        <name>S-adenosyl-L-methionine</name>
        <dbReference type="ChEBI" id="CHEBI:59789"/>
    </ligand>
</feature>
<feature type="binding site" evidence="1">
    <location>
        <position position="246"/>
    </location>
    <ligand>
        <name>S-adenosyl-L-methionine</name>
        <dbReference type="ChEBI" id="CHEBI:59789"/>
    </ligand>
</feature>
<sequence>MNWTELSIIINHEAVELATNILENHGSNGVVIEDSDDLINQPEDKYGEIYALKKEDYPDKGVRLKAYFNEMTYDDKLRQQIKDELLNLDELDQHNIQFSEQIIAETDWENEWKNYFHPFRASKKFTIVPSWETYAKEADEELCIELDPGMAFGTGDHPTTSMCLKAIETYVLPQHSVIDVGTGSGILSIASHLIGVKRIKALDIDEMAVSVAKENFRRNHCETLIEAVPGNLLKDETEKFDIVIANILAHIIDEMIEDAYNTLNEGGYFITSGIIKEKYEGIQSHMERVGFKIISEQHDNGWVCLVGQKVSE</sequence>